<organism>
    <name type="scientific">Microcystis aeruginosa (strain NIES-843 / IAM M-2473)</name>
    <dbReference type="NCBI Taxonomy" id="449447"/>
    <lineage>
        <taxon>Bacteria</taxon>
        <taxon>Bacillati</taxon>
        <taxon>Cyanobacteriota</taxon>
        <taxon>Cyanophyceae</taxon>
        <taxon>Oscillatoriophycideae</taxon>
        <taxon>Chroococcales</taxon>
        <taxon>Microcystaceae</taxon>
        <taxon>Microcystis</taxon>
    </lineage>
</organism>
<dbReference type="EC" id="6.3.5.7" evidence="1"/>
<dbReference type="EMBL" id="AP009552">
    <property type="protein sequence ID" value="BAG01017.1"/>
    <property type="molecule type" value="Genomic_DNA"/>
</dbReference>
<dbReference type="RefSeq" id="WP_004163372.1">
    <property type="nucleotide sequence ID" value="NC_010296.1"/>
</dbReference>
<dbReference type="SMR" id="B0JSX3"/>
<dbReference type="STRING" id="449447.MAE_11950"/>
<dbReference type="PaxDb" id="449447-MAE_11950"/>
<dbReference type="EnsemblBacteria" id="BAG01017">
    <property type="protein sequence ID" value="BAG01017"/>
    <property type="gene ID" value="MAE_11950"/>
</dbReference>
<dbReference type="KEGG" id="mar:MAE_11950"/>
<dbReference type="eggNOG" id="COG0154">
    <property type="taxonomic scope" value="Bacteria"/>
</dbReference>
<dbReference type="HOGENOM" id="CLU_009600_0_3_3"/>
<dbReference type="BioCyc" id="MAER449447:MAE_RS05285-MONOMER"/>
<dbReference type="Proteomes" id="UP000001510">
    <property type="component" value="Chromosome"/>
</dbReference>
<dbReference type="GO" id="GO:0030956">
    <property type="term" value="C:glutamyl-tRNA(Gln) amidotransferase complex"/>
    <property type="evidence" value="ECO:0007669"/>
    <property type="project" value="InterPro"/>
</dbReference>
<dbReference type="GO" id="GO:0005524">
    <property type="term" value="F:ATP binding"/>
    <property type="evidence" value="ECO:0007669"/>
    <property type="project" value="UniProtKB-KW"/>
</dbReference>
<dbReference type="GO" id="GO:0050567">
    <property type="term" value="F:glutaminyl-tRNA synthase (glutamine-hydrolyzing) activity"/>
    <property type="evidence" value="ECO:0007669"/>
    <property type="project" value="UniProtKB-UniRule"/>
</dbReference>
<dbReference type="GO" id="GO:0006412">
    <property type="term" value="P:translation"/>
    <property type="evidence" value="ECO:0007669"/>
    <property type="project" value="UniProtKB-UniRule"/>
</dbReference>
<dbReference type="Gene3D" id="3.90.1300.10">
    <property type="entry name" value="Amidase signature (AS) domain"/>
    <property type="match status" value="1"/>
</dbReference>
<dbReference type="HAMAP" id="MF_00120">
    <property type="entry name" value="GatA"/>
    <property type="match status" value="1"/>
</dbReference>
<dbReference type="InterPro" id="IPR000120">
    <property type="entry name" value="Amidase"/>
</dbReference>
<dbReference type="InterPro" id="IPR020556">
    <property type="entry name" value="Amidase_CS"/>
</dbReference>
<dbReference type="InterPro" id="IPR023631">
    <property type="entry name" value="Amidase_dom"/>
</dbReference>
<dbReference type="InterPro" id="IPR036928">
    <property type="entry name" value="AS_sf"/>
</dbReference>
<dbReference type="InterPro" id="IPR004412">
    <property type="entry name" value="GatA"/>
</dbReference>
<dbReference type="NCBIfam" id="TIGR00132">
    <property type="entry name" value="gatA"/>
    <property type="match status" value="1"/>
</dbReference>
<dbReference type="PANTHER" id="PTHR11895:SF151">
    <property type="entry name" value="GLUTAMYL-TRNA(GLN) AMIDOTRANSFERASE SUBUNIT A"/>
    <property type="match status" value="1"/>
</dbReference>
<dbReference type="PANTHER" id="PTHR11895">
    <property type="entry name" value="TRANSAMIDASE"/>
    <property type="match status" value="1"/>
</dbReference>
<dbReference type="Pfam" id="PF01425">
    <property type="entry name" value="Amidase"/>
    <property type="match status" value="1"/>
</dbReference>
<dbReference type="SUPFAM" id="SSF75304">
    <property type="entry name" value="Amidase signature (AS) enzymes"/>
    <property type="match status" value="1"/>
</dbReference>
<dbReference type="PROSITE" id="PS00571">
    <property type="entry name" value="AMIDASES"/>
    <property type="match status" value="1"/>
</dbReference>
<name>GATA_MICAN</name>
<evidence type="ECO:0000255" key="1">
    <source>
        <dbReference type="HAMAP-Rule" id="MF_00120"/>
    </source>
</evidence>
<reference key="1">
    <citation type="journal article" date="2007" name="DNA Res.">
        <title>Complete genomic structure of the bloom-forming toxic cyanobacterium Microcystis aeruginosa NIES-843.</title>
        <authorList>
            <person name="Kaneko T."/>
            <person name="Nakajima N."/>
            <person name="Okamoto S."/>
            <person name="Suzuki I."/>
            <person name="Tanabe Y."/>
            <person name="Tamaoki M."/>
            <person name="Nakamura Y."/>
            <person name="Kasai F."/>
            <person name="Watanabe A."/>
            <person name="Kawashima K."/>
            <person name="Kishida Y."/>
            <person name="Ono A."/>
            <person name="Shimizu Y."/>
            <person name="Takahashi C."/>
            <person name="Minami C."/>
            <person name="Fujishiro T."/>
            <person name="Kohara M."/>
            <person name="Katoh M."/>
            <person name="Nakazaki N."/>
            <person name="Nakayama S."/>
            <person name="Yamada M."/>
            <person name="Tabata S."/>
            <person name="Watanabe M.M."/>
        </authorList>
    </citation>
    <scope>NUCLEOTIDE SEQUENCE [LARGE SCALE GENOMIC DNA]</scope>
    <source>
        <strain>NIES-843 / IAM M-247</strain>
    </source>
</reference>
<feature type="chain" id="PRO_1000076134" description="Glutamyl-tRNA(Gln) amidotransferase subunit A">
    <location>
        <begin position="1"/>
        <end position="483"/>
    </location>
</feature>
<feature type="active site" description="Charge relay system" evidence="1">
    <location>
        <position position="75"/>
    </location>
</feature>
<feature type="active site" description="Charge relay system" evidence="1">
    <location>
        <position position="150"/>
    </location>
</feature>
<feature type="active site" description="Acyl-ester intermediate" evidence="1">
    <location>
        <position position="174"/>
    </location>
</feature>
<protein>
    <recommendedName>
        <fullName evidence="1">Glutamyl-tRNA(Gln) amidotransferase subunit A</fullName>
        <shortName evidence="1">Glu-ADT subunit A</shortName>
        <ecNumber evidence="1">6.3.5.7</ecNumber>
    </recommendedName>
</protein>
<proteinExistence type="inferred from homology"/>
<keyword id="KW-0067">ATP-binding</keyword>
<keyword id="KW-0436">Ligase</keyword>
<keyword id="KW-0547">Nucleotide-binding</keyword>
<keyword id="KW-0648">Protein biosynthesis</keyword>
<comment type="function">
    <text evidence="1">Allows the formation of correctly charged Gln-tRNA(Gln) through the transamidation of misacylated Glu-tRNA(Gln) in organisms which lack glutaminyl-tRNA synthetase. The reaction takes place in the presence of glutamine and ATP through an activated gamma-phospho-Glu-tRNA(Gln).</text>
</comment>
<comment type="catalytic activity">
    <reaction evidence="1">
        <text>L-glutamyl-tRNA(Gln) + L-glutamine + ATP + H2O = L-glutaminyl-tRNA(Gln) + L-glutamate + ADP + phosphate + H(+)</text>
        <dbReference type="Rhea" id="RHEA:17521"/>
        <dbReference type="Rhea" id="RHEA-COMP:9681"/>
        <dbReference type="Rhea" id="RHEA-COMP:9684"/>
        <dbReference type="ChEBI" id="CHEBI:15377"/>
        <dbReference type="ChEBI" id="CHEBI:15378"/>
        <dbReference type="ChEBI" id="CHEBI:29985"/>
        <dbReference type="ChEBI" id="CHEBI:30616"/>
        <dbReference type="ChEBI" id="CHEBI:43474"/>
        <dbReference type="ChEBI" id="CHEBI:58359"/>
        <dbReference type="ChEBI" id="CHEBI:78520"/>
        <dbReference type="ChEBI" id="CHEBI:78521"/>
        <dbReference type="ChEBI" id="CHEBI:456216"/>
        <dbReference type="EC" id="6.3.5.7"/>
    </reaction>
</comment>
<comment type="subunit">
    <text evidence="1">Heterotrimer of A, B and C subunits.</text>
</comment>
<comment type="similarity">
    <text evidence="1">Belongs to the amidase family. GatA subfamily.</text>
</comment>
<sequence length="483" mass="52034">MTSIRQLHQQLVNKEKTAVEIATEFLARIQALEPQVKSFLHLTPDLALAQAQKVDEKIARGESLHLLAGIPIALKDNLCTKGIPTTCASRILENFVPPYESTVTQKLRDLGAVIVGKTNLDEFAMGSSTENSGYHVTANPWDLSRVPGGSSGGSAAAVAAQECVVALGSDTGGSIRQPASFCGVVGLKPTYGLVSRFGLVAYASSLDQIGPFGRTVEDAAILLQAIAGYDPQDSTSLNLPIPDYSQFLKTSLKGLKIGVIKETFGEGLDQVVAEAVNQALAQLKALGATIKEISCPRFRYGLPTYYIIAPSEASANLARYDGVKYGIREDADSLIDMYTKTRAKGFGAEVKRRIMLGTYTLSAGYYDAYYLKAQKVRTLIKEDFDRAFQSVDVLVSPTSPTTAFKAGEKTADPLSMYLSDLMTIPVNLAGLPGLSLPCGFDGQGLPIGLQLVGNVLREDQLFHVAHAYEQATDWHKRQPSFTN</sequence>
<gene>
    <name evidence="1" type="primary">gatA</name>
    <name type="ordered locus">MAE_11950</name>
</gene>
<accession>B0JSX3</accession>